<sequence>MYYPFVRKALFQLDPERAHEFTFQQLRRITGTPFEALVRQKVPAKPVNCMGLTFKNPLGLAAGLDKDGECIDALGAMGFGSIEIGTVTPRPQPGNDKPRLFRLVDAEGLINRMGFNNLGVDNLVENVKKAHYDGVLGINIGKNKDTPVEQGKDDYLICMEKIYAYAGYIAINISSPNTPGLRTLQYGEALDDLLTAIKNKQNDLQAMHHKYVPIAVKIAPDLSEDELIQVADSLVRHNIDGVIATNTTLDRSLVQGMKNCDQTGGLSGRPLQLKSTEIIRRLSLELNGRLPIIGVGGIDSVIAAREKIAAGASLVQIYSGFIFKGPPLIKEIVTHI</sequence>
<keyword id="KW-1003">Cell membrane</keyword>
<keyword id="KW-0285">Flavoprotein</keyword>
<keyword id="KW-0288">FMN</keyword>
<keyword id="KW-0472">Membrane</keyword>
<keyword id="KW-0560">Oxidoreductase</keyword>
<keyword id="KW-0665">Pyrimidine biosynthesis</keyword>
<keyword id="KW-1185">Reference proteome</keyword>
<comment type="function">
    <text evidence="1">Catalyzes the conversion of dihydroorotate to orotate with quinone as electron acceptor.</text>
</comment>
<comment type="catalytic activity">
    <reaction evidence="1">
        <text>(S)-dihydroorotate + a quinone = orotate + a quinol</text>
        <dbReference type="Rhea" id="RHEA:30187"/>
        <dbReference type="ChEBI" id="CHEBI:24646"/>
        <dbReference type="ChEBI" id="CHEBI:30839"/>
        <dbReference type="ChEBI" id="CHEBI:30864"/>
        <dbReference type="ChEBI" id="CHEBI:132124"/>
        <dbReference type="EC" id="1.3.5.2"/>
    </reaction>
</comment>
<comment type="cofactor">
    <cofactor evidence="1">
        <name>FMN</name>
        <dbReference type="ChEBI" id="CHEBI:58210"/>
    </cofactor>
    <text evidence="1">Binds 1 FMN per subunit.</text>
</comment>
<comment type="pathway">
    <text evidence="1">Pyrimidine metabolism; UMP biosynthesis via de novo pathway; orotate from (S)-dihydroorotate (quinone route): step 1/1.</text>
</comment>
<comment type="subunit">
    <text evidence="1">Monomer.</text>
</comment>
<comment type="subcellular location">
    <subcellularLocation>
        <location evidence="1">Cell membrane</location>
        <topology evidence="1">Peripheral membrane protein</topology>
    </subcellularLocation>
</comment>
<comment type="similarity">
    <text evidence="1">Belongs to the dihydroorotate dehydrogenase family. Type 2 subfamily.</text>
</comment>
<protein>
    <recommendedName>
        <fullName evidence="1">Dihydroorotate dehydrogenase (quinone)</fullName>
        <ecNumber evidence="1">1.3.5.2</ecNumber>
    </recommendedName>
    <alternativeName>
        <fullName evidence="1">DHOdehase</fullName>
        <shortName evidence="1">DHOD</shortName>
        <shortName evidence="1">DHODase</shortName>
    </alternativeName>
    <alternativeName>
        <fullName evidence="1">Dihydroorotate oxidase</fullName>
    </alternativeName>
</protein>
<dbReference type="EC" id="1.3.5.2" evidence="1"/>
<dbReference type="EMBL" id="AE005674">
    <property type="protein sequence ID" value="AAN42575.2"/>
    <property type="molecule type" value="Genomic_DNA"/>
</dbReference>
<dbReference type="EMBL" id="AE014073">
    <property type="protein sequence ID" value="AAP16459.1"/>
    <property type="molecule type" value="Genomic_DNA"/>
</dbReference>
<dbReference type="RefSeq" id="NP_706868.2">
    <property type="nucleotide sequence ID" value="NC_004337.2"/>
</dbReference>
<dbReference type="RefSeq" id="WP_001370288.1">
    <property type="nucleotide sequence ID" value="NZ_WPGW01000054.1"/>
</dbReference>
<dbReference type="SMR" id="Q83RX6"/>
<dbReference type="STRING" id="198214.SF0946"/>
<dbReference type="PaxDb" id="198214-SF0946"/>
<dbReference type="GeneID" id="1023933"/>
<dbReference type="KEGG" id="sfl:SF0946"/>
<dbReference type="KEGG" id="sfx:S1011"/>
<dbReference type="PATRIC" id="fig|198214.7.peg.1103"/>
<dbReference type="HOGENOM" id="CLU_013640_2_0_6"/>
<dbReference type="UniPathway" id="UPA00070">
    <property type="reaction ID" value="UER00946"/>
</dbReference>
<dbReference type="Proteomes" id="UP000001006">
    <property type="component" value="Chromosome"/>
</dbReference>
<dbReference type="Proteomes" id="UP000002673">
    <property type="component" value="Chromosome"/>
</dbReference>
<dbReference type="GO" id="GO:0005737">
    <property type="term" value="C:cytoplasm"/>
    <property type="evidence" value="ECO:0007669"/>
    <property type="project" value="InterPro"/>
</dbReference>
<dbReference type="GO" id="GO:0005886">
    <property type="term" value="C:plasma membrane"/>
    <property type="evidence" value="ECO:0007669"/>
    <property type="project" value="UniProtKB-SubCell"/>
</dbReference>
<dbReference type="GO" id="GO:0106430">
    <property type="term" value="F:dihydroorotate dehydrogenase (quinone) activity"/>
    <property type="evidence" value="ECO:0007669"/>
    <property type="project" value="UniProtKB-EC"/>
</dbReference>
<dbReference type="GO" id="GO:0006207">
    <property type="term" value="P:'de novo' pyrimidine nucleobase biosynthetic process"/>
    <property type="evidence" value="ECO:0007669"/>
    <property type="project" value="InterPro"/>
</dbReference>
<dbReference type="GO" id="GO:0044205">
    <property type="term" value="P:'de novo' UMP biosynthetic process"/>
    <property type="evidence" value="ECO:0007669"/>
    <property type="project" value="UniProtKB-UniRule"/>
</dbReference>
<dbReference type="CDD" id="cd04738">
    <property type="entry name" value="DHOD_2_like"/>
    <property type="match status" value="1"/>
</dbReference>
<dbReference type="FunFam" id="3.20.20.70:FF:000028">
    <property type="entry name" value="Dihydroorotate dehydrogenase (quinone)"/>
    <property type="match status" value="1"/>
</dbReference>
<dbReference type="Gene3D" id="3.20.20.70">
    <property type="entry name" value="Aldolase class I"/>
    <property type="match status" value="1"/>
</dbReference>
<dbReference type="HAMAP" id="MF_00225">
    <property type="entry name" value="DHO_dh_type2"/>
    <property type="match status" value="1"/>
</dbReference>
<dbReference type="InterPro" id="IPR013785">
    <property type="entry name" value="Aldolase_TIM"/>
</dbReference>
<dbReference type="InterPro" id="IPR050074">
    <property type="entry name" value="DHO_dehydrogenase"/>
</dbReference>
<dbReference type="InterPro" id="IPR012135">
    <property type="entry name" value="Dihydroorotate_DH_1_2"/>
</dbReference>
<dbReference type="InterPro" id="IPR005719">
    <property type="entry name" value="Dihydroorotate_DH_2"/>
</dbReference>
<dbReference type="InterPro" id="IPR005720">
    <property type="entry name" value="Dihydroorotate_DH_cat"/>
</dbReference>
<dbReference type="InterPro" id="IPR001295">
    <property type="entry name" value="Dihydroorotate_DH_CS"/>
</dbReference>
<dbReference type="NCBIfam" id="NF003644">
    <property type="entry name" value="PRK05286.1-1"/>
    <property type="match status" value="1"/>
</dbReference>
<dbReference type="NCBIfam" id="NF003645">
    <property type="entry name" value="PRK05286.1-2"/>
    <property type="match status" value="1"/>
</dbReference>
<dbReference type="NCBIfam" id="NF003646">
    <property type="entry name" value="PRK05286.1-4"/>
    <property type="match status" value="1"/>
</dbReference>
<dbReference type="NCBIfam" id="NF003652">
    <property type="entry name" value="PRK05286.2-5"/>
    <property type="match status" value="1"/>
</dbReference>
<dbReference type="NCBIfam" id="TIGR01036">
    <property type="entry name" value="pyrD_sub2"/>
    <property type="match status" value="1"/>
</dbReference>
<dbReference type="PANTHER" id="PTHR48109:SF4">
    <property type="entry name" value="DIHYDROOROTATE DEHYDROGENASE (QUINONE), MITOCHONDRIAL"/>
    <property type="match status" value="1"/>
</dbReference>
<dbReference type="PANTHER" id="PTHR48109">
    <property type="entry name" value="DIHYDROOROTATE DEHYDROGENASE (QUINONE), MITOCHONDRIAL-RELATED"/>
    <property type="match status" value="1"/>
</dbReference>
<dbReference type="Pfam" id="PF01180">
    <property type="entry name" value="DHO_dh"/>
    <property type="match status" value="1"/>
</dbReference>
<dbReference type="PIRSF" id="PIRSF000164">
    <property type="entry name" value="DHO_oxidase"/>
    <property type="match status" value="1"/>
</dbReference>
<dbReference type="SUPFAM" id="SSF51395">
    <property type="entry name" value="FMN-linked oxidoreductases"/>
    <property type="match status" value="1"/>
</dbReference>
<dbReference type="PROSITE" id="PS00911">
    <property type="entry name" value="DHODEHASE_1"/>
    <property type="match status" value="1"/>
</dbReference>
<dbReference type="PROSITE" id="PS00912">
    <property type="entry name" value="DHODEHASE_2"/>
    <property type="match status" value="1"/>
</dbReference>
<organism>
    <name type="scientific">Shigella flexneri</name>
    <dbReference type="NCBI Taxonomy" id="623"/>
    <lineage>
        <taxon>Bacteria</taxon>
        <taxon>Pseudomonadati</taxon>
        <taxon>Pseudomonadota</taxon>
        <taxon>Gammaproteobacteria</taxon>
        <taxon>Enterobacterales</taxon>
        <taxon>Enterobacteriaceae</taxon>
        <taxon>Shigella</taxon>
    </lineage>
</organism>
<gene>
    <name evidence="1" type="primary">pyrD</name>
    <name type="ordered locus">SF0946</name>
    <name type="ordered locus">S1011</name>
</gene>
<name>PYRD_SHIFL</name>
<accession>Q83RX6</accession>
<accession>Q7UD21</accession>
<feature type="chain" id="PRO_1000024233" description="Dihydroorotate dehydrogenase (quinone)">
    <location>
        <begin position="1"/>
        <end position="336"/>
    </location>
</feature>
<feature type="active site" description="Nucleophile" evidence="1">
    <location>
        <position position="175"/>
    </location>
</feature>
<feature type="binding site" evidence="1">
    <location>
        <begin position="62"/>
        <end position="66"/>
    </location>
    <ligand>
        <name>FMN</name>
        <dbReference type="ChEBI" id="CHEBI:58210"/>
    </ligand>
</feature>
<feature type="binding site" evidence="1">
    <location>
        <position position="66"/>
    </location>
    <ligand>
        <name>substrate</name>
    </ligand>
</feature>
<feature type="binding site" evidence="1">
    <location>
        <position position="86"/>
    </location>
    <ligand>
        <name>FMN</name>
        <dbReference type="ChEBI" id="CHEBI:58210"/>
    </ligand>
</feature>
<feature type="binding site" evidence="1">
    <location>
        <begin position="111"/>
        <end position="115"/>
    </location>
    <ligand>
        <name>substrate</name>
    </ligand>
</feature>
<feature type="binding site" evidence="1">
    <location>
        <position position="139"/>
    </location>
    <ligand>
        <name>FMN</name>
        <dbReference type="ChEBI" id="CHEBI:58210"/>
    </ligand>
</feature>
<feature type="binding site" evidence="1">
    <location>
        <position position="172"/>
    </location>
    <ligand>
        <name>FMN</name>
        <dbReference type="ChEBI" id="CHEBI:58210"/>
    </ligand>
</feature>
<feature type="binding site" evidence="1">
    <location>
        <position position="172"/>
    </location>
    <ligand>
        <name>substrate</name>
    </ligand>
</feature>
<feature type="binding site" evidence="1">
    <location>
        <position position="177"/>
    </location>
    <ligand>
        <name>substrate</name>
    </ligand>
</feature>
<feature type="binding site" evidence="1">
    <location>
        <position position="217"/>
    </location>
    <ligand>
        <name>FMN</name>
        <dbReference type="ChEBI" id="CHEBI:58210"/>
    </ligand>
</feature>
<feature type="binding site" evidence="1">
    <location>
        <position position="245"/>
    </location>
    <ligand>
        <name>FMN</name>
        <dbReference type="ChEBI" id="CHEBI:58210"/>
    </ligand>
</feature>
<feature type="binding site" evidence="1">
    <location>
        <begin position="246"/>
        <end position="247"/>
    </location>
    <ligand>
        <name>substrate</name>
    </ligand>
</feature>
<feature type="binding site" evidence="1">
    <location>
        <position position="268"/>
    </location>
    <ligand>
        <name>FMN</name>
        <dbReference type="ChEBI" id="CHEBI:58210"/>
    </ligand>
</feature>
<feature type="binding site" evidence="1">
    <location>
        <position position="297"/>
    </location>
    <ligand>
        <name>FMN</name>
        <dbReference type="ChEBI" id="CHEBI:58210"/>
    </ligand>
</feature>
<feature type="binding site" evidence="1">
    <location>
        <begin position="318"/>
        <end position="319"/>
    </location>
    <ligand>
        <name>FMN</name>
        <dbReference type="ChEBI" id="CHEBI:58210"/>
    </ligand>
</feature>
<proteinExistence type="inferred from homology"/>
<reference key="1">
    <citation type="journal article" date="2002" name="Nucleic Acids Res.">
        <title>Genome sequence of Shigella flexneri 2a: insights into pathogenicity through comparison with genomes of Escherichia coli K12 and O157.</title>
        <authorList>
            <person name="Jin Q."/>
            <person name="Yuan Z."/>
            <person name="Xu J."/>
            <person name="Wang Y."/>
            <person name="Shen Y."/>
            <person name="Lu W."/>
            <person name="Wang J."/>
            <person name="Liu H."/>
            <person name="Yang J."/>
            <person name="Yang F."/>
            <person name="Zhang X."/>
            <person name="Zhang J."/>
            <person name="Yang G."/>
            <person name="Wu H."/>
            <person name="Qu D."/>
            <person name="Dong J."/>
            <person name="Sun L."/>
            <person name="Xue Y."/>
            <person name="Zhao A."/>
            <person name="Gao Y."/>
            <person name="Zhu J."/>
            <person name="Kan B."/>
            <person name="Ding K."/>
            <person name="Chen S."/>
            <person name="Cheng H."/>
            <person name="Yao Z."/>
            <person name="He B."/>
            <person name="Chen R."/>
            <person name="Ma D."/>
            <person name="Qiang B."/>
            <person name="Wen Y."/>
            <person name="Hou Y."/>
            <person name="Yu J."/>
        </authorList>
    </citation>
    <scope>NUCLEOTIDE SEQUENCE [LARGE SCALE GENOMIC DNA]</scope>
    <source>
        <strain>301 / Serotype 2a</strain>
    </source>
</reference>
<reference key="2">
    <citation type="journal article" date="2003" name="Infect. Immun.">
        <title>Complete genome sequence and comparative genomics of Shigella flexneri serotype 2a strain 2457T.</title>
        <authorList>
            <person name="Wei J."/>
            <person name="Goldberg M.B."/>
            <person name="Burland V."/>
            <person name="Venkatesan M.M."/>
            <person name="Deng W."/>
            <person name="Fournier G."/>
            <person name="Mayhew G.F."/>
            <person name="Plunkett G. III"/>
            <person name="Rose D.J."/>
            <person name="Darling A."/>
            <person name="Mau B."/>
            <person name="Perna N.T."/>
            <person name="Payne S.M."/>
            <person name="Runyen-Janecky L.J."/>
            <person name="Zhou S."/>
            <person name="Schwartz D.C."/>
            <person name="Blattner F.R."/>
        </authorList>
    </citation>
    <scope>NUCLEOTIDE SEQUENCE [LARGE SCALE GENOMIC DNA]</scope>
    <source>
        <strain>ATCC 700930 / 2457T / Serotype 2a</strain>
    </source>
</reference>
<evidence type="ECO:0000255" key="1">
    <source>
        <dbReference type="HAMAP-Rule" id="MF_00225"/>
    </source>
</evidence>